<gene>
    <name type="primary">pufL</name>
</gene>
<sequence length="276" mass="30640">MALLSFERKYRVRGGTLIGGDLFDFWVGPFYVGFFGVTTLLFTVLGTALIVWGAALGPSWTFWQISINPPDVSYGLAMAPMAKGGLWQIITFSAIGAFVSWALREVEICRKLGIGYHIPFAFGFAILAYVSLVVIRPVMMGAWGYGFPYGFMTHLDWVSNTGYQYANFHYNPAHMLGITLFFTTCLALALHGSLILSAANPGKGEVVKGPEHENTYFQDTIGYSVGTLGIHRVGLILALSAVVWSIICMILSGPIYTGSWPDWWLWWQKLPFWNHG</sequence>
<name>RCEL_RHORU</name>
<comment type="function">
    <text>The reaction center is a membrane-bound complex that mediates the initial photochemical event in the electron transfer process of photosynthesis.</text>
</comment>
<comment type="subunit">
    <text>Reaction center is composed of four bacteriochlorophylls, two bacteriopheophytins, two ubiquinones, one iron, and three highly hydrophobic polypeptide chains (designated L, M, and H).</text>
</comment>
<comment type="subcellular location">
    <subcellularLocation>
        <location evidence="1">Cellular chromatophore membrane</location>
        <topology evidence="1">Multi-pass membrane protein</topology>
    </subcellularLocation>
</comment>
<comment type="similarity">
    <text evidence="3">Belongs to the reaction center PufL/M/PsbA/D family.</text>
</comment>
<evidence type="ECO:0000250" key="1"/>
<evidence type="ECO:0000269" key="2">
    <source>
    </source>
</evidence>
<evidence type="ECO:0000305" key="3"/>
<evidence type="ECO:0007829" key="4">
    <source>
        <dbReference type="PDB" id="7EQD"/>
    </source>
</evidence>
<reference key="1">
    <citation type="journal article" date="1988" name="J. Biol. Chem.">
        <title>The structural genes coding for the L and M subunits of Rhodospirillum rubrum photoreaction center.</title>
        <authorList>
            <person name="Belanger G."/>
            <person name="Berard J."/>
            <person name="Corriveau P."/>
            <person name="Gingras G."/>
        </authorList>
    </citation>
    <scope>NUCLEOTIDE SEQUENCE [GENOMIC DNA]</scope>
</reference>
<reference key="2">
    <citation type="journal article" date="1983" name="Hoppe-Seyler's Z. Physiol. Chem.">
        <title>N-terminal sequences of subunits L and M of the photosynthetic reaction centre from Rhodospirillum rubrum G-9+. Separation of the subunits by gel filtration on hydroxypropylated Sephadex G 100 in organic solvents.</title>
        <authorList>
            <person name="Theiler R."/>
            <person name="Suter F."/>
            <person name="Zuber H."/>
        </authorList>
    </citation>
    <scope>PROTEIN SEQUENCE OF 2-37</scope>
</reference>
<proteinExistence type="evidence at protein level"/>
<protein>
    <recommendedName>
        <fullName>Reaction center protein L chain</fullName>
    </recommendedName>
    <alternativeName>
        <fullName>Photosynthetic reaction center L subunit</fullName>
    </alternativeName>
</protein>
<organism>
    <name type="scientific">Rhodospirillum rubrum</name>
    <dbReference type="NCBI Taxonomy" id="1085"/>
    <lineage>
        <taxon>Bacteria</taxon>
        <taxon>Pseudomonadati</taxon>
        <taxon>Pseudomonadota</taxon>
        <taxon>Alphaproteobacteria</taxon>
        <taxon>Rhodospirillales</taxon>
        <taxon>Rhodospirillaceae</taxon>
        <taxon>Rhodospirillum</taxon>
    </lineage>
</organism>
<feature type="initiator methionine" description="Removed" evidence="2">
    <location>
        <position position="1"/>
    </location>
</feature>
<feature type="chain" id="PRO_0000090409" description="Reaction center protein L chain">
    <location>
        <begin position="2"/>
        <end position="276"/>
    </location>
</feature>
<feature type="transmembrane region" description="Helical">
    <location>
        <begin position="33"/>
        <end position="56"/>
    </location>
</feature>
<feature type="transmembrane region" description="Helical">
    <location>
        <begin position="85"/>
        <end position="113"/>
    </location>
</feature>
<feature type="transmembrane region" description="Helical">
    <location>
        <begin position="116"/>
        <end position="141"/>
    </location>
</feature>
<feature type="transmembrane region" description="Helical">
    <location>
        <begin position="171"/>
        <end position="200"/>
    </location>
</feature>
<feature type="transmembrane region" description="Helical">
    <location>
        <begin position="226"/>
        <end position="252"/>
    </location>
</feature>
<feature type="binding site" description="axial binding residue">
    <location>
        <position position="154"/>
    </location>
    <ligand>
        <name>(7R,8Z)-bacteriochlorophyll b</name>
        <dbReference type="ChEBI" id="CHEBI:30034"/>
    </ligand>
    <ligandPart>
        <name>Mg</name>
        <dbReference type="ChEBI" id="CHEBI:25107"/>
    </ligandPart>
</feature>
<feature type="binding site" description="axial binding residue">
    <location>
        <position position="174"/>
    </location>
    <ligand>
        <name>(7R,8Z)-bacteriochlorophyll b</name>
        <dbReference type="ChEBI" id="CHEBI:30034"/>
    </ligand>
    <ligandPart>
        <name>Mg</name>
        <dbReference type="ChEBI" id="CHEBI:25107"/>
    </ligandPart>
</feature>
<feature type="binding site">
    <location>
        <position position="191"/>
    </location>
    <ligand>
        <name>Fe cation</name>
        <dbReference type="ChEBI" id="CHEBI:24875"/>
    </ligand>
</feature>
<feature type="binding site">
    <location>
        <position position="217"/>
    </location>
    <ligand>
        <name>a ubiquinone</name>
        <dbReference type="ChEBI" id="CHEBI:16389"/>
    </ligand>
</feature>
<feature type="binding site">
    <location>
        <position position="231"/>
    </location>
    <ligand>
        <name>Fe cation</name>
        <dbReference type="ChEBI" id="CHEBI:24875"/>
    </ligand>
</feature>
<feature type="turn" evidence="4">
    <location>
        <begin position="5"/>
        <end position="9"/>
    </location>
</feature>
<feature type="strand" evidence="4">
    <location>
        <begin position="17"/>
        <end position="19"/>
    </location>
</feature>
<feature type="helix" evidence="4">
    <location>
        <begin position="33"/>
        <end position="56"/>
    </location>
</feature>
<feature type="turn" evidence="4">
    <location>
        <begin position="62"/>
        <end position="64"/>
    </location>
</feature>
<feature type="helix" evidence="4">
    <location>
        <begin position="72"/>
        <end position="74"/>
    </location>
</feature>
<feature type="turn" evidence="4">
    <location>
        <begin position="81"/>
        <end position="84"/>
    </location>
</feature>
<feature type="helix" evidence="4">
    <location>
        <begin position="85"/>
        <end position="112"/>
    </location>
</feature>
<feature type="helix" evidence="4">
    <location>
        <begin position="117"/>
        <end position="133"/>
    </location>
</feature>
<feature type="helix" evidence="4">
    <location>
        <begin position="135"/>
        <end position="140"/>
    </location>
</feature>
<feature type="helix" evidence="4">
    <location>
        <begin position="143"/>
        <end position="145"/>
    </location>
</feature>
<feature type="helix" evidence="4">
    <location>
        <begin position="153"/>
        <end position="164"/>
    </location>
</feature>
<feature type="helix" evidence="4">
    <location>
        <begin position="168"/>
        <end position="170"/>
    </location>
</feature>
<feature type="helix" evidence="4">
    <location>
        <begin position="172"/>
        <end position="199"/>
    </location>
</feature>
<feature type="helix" evidence="4">
    <location>
        <begin position="210"/>
        <end position="220"/>
    </location>
</feature>
<feature type="helix" evidence="4">
    <location>
        <begin position="229"/>
        <end position="251"/>
    </location>
</feature>
<feature type="turn" evidence="4">
    <location>
        <begin position="253"/>
        <end position="255"/>
    </location>
</feature>
<feature type="helix" evidence="4">
    <location>
        <begin position="261"/>
        <end position="264"/>
    </location>
</feature>
<feature type="helix" evidence="4">
    <location>
        <begin position="265"/>
        <end position="268"/>
    </location>
</feature>
<feature type="turn" evidence="4">
    <location>
        <begin position="271"/>
        <end position="273"/>
    </location>
</feature>
<keyword id="KW-0002">3D-structure</keyword>
<keyword id="KW-0076">Bacteriochlorophyll</keyword>
<keyword id="KW-0148">Chlorophyll</keyword>
<keyword id="KW-0157">Chromophore</keyword>
<keyword id="KW-0903">Direct protein sequencing</keyword>
<keyword id="KW-0249">Electron transport</keyword>
<keyword id="KW-0408">Iron</keyword>
<keyword id="KW-0460">Magnesium</keyword>
<keyword id="KW-0472">Membrane</keyword>
<keyword id="KW-0479">Metal-binding</keyword>
<keyword id="KW-0602">Photosynthesis</keyword>
<keyword id="KW-0674">Reaction center</keyword>
<keyword id="KW-0812">Transmembrane</keyword>
<keyword id="KW-1133">Transmembrane helix</keyword>
<keyword id="KW-0813">Transport</keyword>
<accession>P10717</accession>
<dbReference type="EMBL" id="J03731">
    <property type="protein sequence ID" value="AAA26464.1"/>
    <property type="molecule type" value="Genomic_DNA"/>
</dbReference>
<dbReference type="PIR" id="A28170">
    <property type="entry name" value="A28170"/>
</dbReference>
<dbReference type="RefSeq" id="WP_011390723.1">
    <property type="nucleotide sequence ID" value="NZ_DAMDTZ010000062.1"/>
</dbReference>
<dbReference type="PDB" id="7EQD">
    <property type="method" value="EM"/>
    <property type="resolution" value="2.76 A"/>
    <property type="chains" value="L=2-276"/>
</dbReference>
<dbReference type="PDB" id="9K3Q">
    <property type="method" value="EM"/>
    <property type="resolution" value="3.02 A"/>
    <property type="chains" value="L=2-275"/>
</dbReference>
<dbReference type="PDBsum" id="7EQD"/>
<dbReference type="PDBsum" id="9K3Q"/>
<dbReference type="EMDB" id="EMD-31258"/>
<dbReference type="EMDB" id="EMD-62025"/>
<dbReference type="SMR" id="P10717"/>
<dbReference type="OMA" id="WGHGFPY"/>
<dbReference type="GO" id="GO:0030077">
    <property type="term" value="C:plasma membrane light-harvesting complex"/>
    <property type="evidence" value="ECO:0007669"/>
    <property type="project" value="InterPro"/>
</dbReference>
<dbReference type="GO" id="GO:0042717">
    <property type="term" value="C:plasma membrane-derived chromatophore membrane"/>
    <property type="evidence" value="ECO:0007669"/>
    <property type="project" value="UniProtKB-SubCell"/>
</dbReference>
<dbReference type="GO" id="GO:0042314">
    <property type="term" value="F:bacteriochlorophyll binding"/>
    <property type="evidence" value="ECO:0007669"/>
    <property type="project" value="UniProtKB-KW"/>
</dbReference>
<dbReference type="GO" id="GO:0045156">
    <property type="term" value="F:electron transporter, transferring electrons within the cyclic electron transport pathway of photosynthesis activity"/>
    <property type="evidence" value="ECO:0007669"/>
    <property type="project" value="InterPro"/>
</dbReference>
<dbReference type="GO" id="GO:0046872">
    <property type="term" value="F:metal ion binding"/>
    <property type="evidence" value="ECO:0007669"/>
    <property type="project" value="UniProtKB-KW"/>
</dbReference>
<dbReference type="GO" id="GO:0009772">
    <property type="term" value="P:photosynthetic electron transport in photosystem II"/>
    <property type="evidence" value="ECO:0007669"/>
    <property type="project" value="InterPro"/>
</dbReference>
<dbReference type="CDD" id="cd09290">
    <property type="entry name" value="Photo-RC_L"/>
    <property type="match status" value="1"/>
</dbReference>
<dbReference type="Gene3D" id="1.20.85.10">
    <property type="entry name" value="Photosystem II protein D1-like"/>
    <property type="match status" value="2"/>
</dbReference>
<dbReference type="InterPro" id="IPR036854">
    <property type="entry name" value="Photo_II_D1/D2_sf"/>
</dbReference>
<dbReference type="InterPro" id="IPR005871">
    <property type="entry name" value="Photo_RC_L"/>
</dbReference>
<dbReference type="InterPro" id="IPR000484">
    <property type="entry name" value="Photo_RC_L/M"/>
</dbReference>
<dbReference type="InterPro" id="IPR055265">
    <property type="entry name" value="Photo_RC_L/M_CS"/>
</dbReference>
<dbReference type="NCBIfam" id="TIGR01157">
    <property type="entry name" value="pufL"/>
    <property type="match status" value="1"/>
</dbReference>
<dbReference type="Pfam" id="PF00124">
    <property type="entry name" value="Photo_RC"/>
    <property type="match status" value="1"/>
</dbReference>
<dbReference type="PRINTS" id="PR00256">
    <property type="entry name" value="REACTNCENTRE"/>
</dbReference>
<dbReference type="SUPFAM" id="SSF81483">
    <property type="entry name" value="Bacterial photosystem II reaction centre, L and M subunits"/>
    <property type="match status" value="1"/>
</dbReference>
<dbReference type="PROSITE" id="PS00244">
    <property type="entry name" value="REACTION_CENTER"/>
    <property type="match status" value="1"/>
</dbReference>